<sequence>MTRIDDTFRRLRAEGKKAFVAYIMAGDPDLETSLAVMRGLPEAGVDIIELGMPFTDPMADGPTIQTAGQRALEGGQTLTRTLEMVRAFRAENAETPIVMMGYYNPIYARGVETFLAEATEAGIDGLIVVDLPPEEDAELCLPAQAAGLNFIRLATPTTDSRRLPKVLQNTSGFVYYVSITGITGAAAAQAADVAPEVARIKAATDLPVIVGFGITTPEAAQDLAGIADGCVVGSAIVKLVGEGRPVAEVLDRVAALAAGAHAA</sequence>
<reference key="1">
    <citation type="submission" date="2007-02" db="EMBL/GenBank/DDBJ databases">
        <title>Complete sequence of chromosome 1 of Rhodobacter sphaeroides ATCC 17029.</title>
        <authorList>
            <person name="Copeland A."/>
            <person name="Lucas S."/>
            <person name="Lapidus A."/>
            <person name="Barry K."/>
            <person name="Detter J.C."/>
            <person name="Glavina del Rio T."/>
            <person name="Hammon N."/>
            <person name="Israni S."/>
            <person name="Dalin E."/>
            <person name="Tice H."/>
            <person name="Pitluck S."/>
            <person name="Kiss H."/>
            <person name="Brettin T."/>
            <person name="Bruce D."/>
            <person name="Han C."/>
            <person name="Tapia R."/>
            <person name="Gilna P."/>
            <person name="Schmutz J."/>
            <person name="Larimer F."/>
            <person name="Land M."/>
            <person name="Hauser L."/>
            <person name="Kyrpides N."/>
            <person name="Mikhailova N."/>
            <person name="Richardson P."/>
            <person name="Mackenzie C."/>
            <person name="Choudhary M."/>
            <person name="Donohue T.J."/>
            <person name="Kaplan S."/>
        </authorList>
    </citation>
    <scope>NUCLEOTIDE SEQUENCE [LARGE SCALE GENOMIC DNA]</scope>
    <source>
        <strain>ATCC 17029 / ATH 2.4.9</strain>
    </source>
</reference>
<dbReference type="EC" id="4.2.1.20" evidence="1"/>
<dbReference type="EMBL" id="CP000577">
    <property type="protein sequence ID" value="ABN77591.1"/>
    <property type="molecule type" value="Genomic_DNA"/>
</dbReference>
<dbReference type="RefSeq" id="WP_011338525.1">
    <property type="nucleotide sequence ID" value="NC_009049.1"/>
</dbReference>
<dbReference type="SMR" id="A3PMM5"/>
<dbReference type="GeneID" id="3718371"/>
<dbReference type="KEGG" id="rsh:Rsph17029_2489"/>
<dbReference type="HOGENOM" id="CLU_016734_0_4_5"/>
<dbReference type="UniPathway" id="UPA00035">
    <property type="reaction ID" value="UER00044"/>
</dbReference>
<dbReference type="GO" id="GO:0005829">
    <property type="term" value="C:cytosol"/>
    <property type="evidence" value="ECO:0007669"/>
    <property type="project" value="TreeGrafter"/>
</dbReference>
<dbReference type="GO" id="GO:0004834">
    <property type="term" value="F:tryptophan synthase activity"/>
    <property type="evidence" value="ECO:0007669"/>
    <property type="project" value="UniProtKB-UniRule"/>
</dbReference>
<dbReference type="CDD" id="cd04724">
    <property type="entry name" value="Tryptophan_synthase_alpha"/>
    <property type="match status" value="1"/>
</dbReference>
<dbReference type="FunFam" id="3.20.20.70:FF:000037">
    <property type="entry name" value="Tryptophan synthase alpha chain"/>
    <property type="match status" value="1"/>
</dbReference>
<dbReference type="Gene3D" id="3.20.20.70">
    <property type="entry name" value="Aldolase class I"/>
    <property type="match status" value="1"/>
</dbReference>
<dbReference type="HAMAP" id="MF_00131">
    <property type="entry name" value="Trp_synth_alpha"/>
    <property type="match status" value="1"/>
</dbReference>
<dbReference type="InterPro" id="IPR013785">
    <property type="entry name" value="Aldolase_TIM"/>
</dbReference>
<dbReference type="InterPro" id="IPR011060">
    <property type="entry name" value="RibuloseP-bd_barrel"/>
</dbReference>
<dbReference type="InterPro" id="IPR018204">
    <property type="entry name" value="Trp_synthase_alpha_AS"/>
</dbReference>
<dbReference type="InterPro" id="IPR002028">
    <property type="entry name" value="Trp_synthase_suA"/>
</dbReference>
<dbReference type="NCBIfam" id="TIGR00262">
    <property type="entry name" value="trpA"/>
    <property type="match status" value="1"/>
</dbReference>
<dbReference type="PANTHER" id="PTHR43406:SF1">
    <property type="entry name" value="TRYPTOPHAN SYNTHASE ALPHA CHAIN, CHLOROPLASTIC"/>
    <property type="match status" value="1"/>
</dbReference>
<dbReference type="PANTHER" id="PTHR43406">
    <property type="entry name" value="TRYPTOPHAN SYNTHASE, ALPHA CHAIN"/>
    <property type="match status" value="1"/>
</dbReference>
<dbReference type="Pfam" id="PF00290">
    <property type="entry name" value="Trp_syntA"/>
    <property type="match status" value="1"/>
</dbReference>
<dbReference type="SUPFAM" id="SSF51366">
    <property type="entry name" value="Ribulose-phoshate binding barrel"/>
    <property type="match status" value="1"/>
</dbReference>
<dbReference type="PROSITE" id="PS00167">
    <property type="entry name" value="TRP_SYNTHASE_ALPHA"/>
    <property type="match status" value="1"/>
</dbReference>
<name>TRPA_CERS1</name>
<gene>
    <name evidence="1" type="primary">trpA</name>
    <name type="ordered locus">Rsph17029_2489</name>
</gene>
<accession>A3PMM5</accession>
<evidence type="ECO:0000255" key="1">
    <source>
        <dbReference type="HAMAP-Rule" id="MF_00131"/>
    </source>
</evidence>
<keyword id="KW-0028">Amino-acid biosynthesis</keyword>
<keyword id="KW-0057">Aromatic amino acid biosynthesis</keyword>
<keyword id="KW-0456">Lyase</keyword>
<keyword id="KW-0822">Tryptophan biosynthesis</keyword>
<comment type="function">
    <text evidence="1">The alpha subunit is responsible for the aldol cleavage of indoleglycerol phosphate to indole and glyceraldehyde 3-phosphate.</text>
</comment>
<comment type="catalytic activity">
    <reaction evidence="1">
        <text>(1S,2R)-1-C-(indol-3-yl)glycerol 3-phosphate + L-serine = D-glyceraldehyde 3-phosphate + L-tryptophan + H2O</text>
        <dbReference type="Rhea" id="RHEA:10532"/>
        <dbReference type="ChEBI" id="CHEBI:15377"/>
        <dbReference type="ChEBI" id="CHEBI:33384"/>
        <dbReference type="ChEBI" id="CHEBI:57912"/>
        <dbReference type="ChEBI" id="CHEBI:58866"/>
        <dbReference type="ChEBI" id="CHEBI:59776"/>
        <dbReference type="EC" id="4.2.1.20"/>
    </reaction>
</comment>
<comment type="pathway">
    <text evidence="1">Amino-acid biosynthesis; L-tryptophan biosynthesis; L-tryptophan from chorismate: step 5/5.</text>
</comment>
<comment type="subunit">
    <text evidence="1">Tetramer of two alpha and two beta chains.</text>
</comment>
<comment type="similarity">
    <text evidence="1">Belongs to the TrpA family.</text>
</comment>
<proteinExistence type="inferred from homology"/>
<feature type="chain" id="PRO_1000018271" description="Tryptophan synthase alpha chain">
    <location>
        <begin position="1"/>
        <end position="263"/>
    </location>
</feature>
<feature type="active site" description="Proton acceptor" evidence="1">
    <location>
        <position position="49"/>
    </location>
</feature>
<feature type="active site" description="Proton acceptor" evidence="1">
    <location>
        <position position="60"/>
    </location>
</feature>
<protein>
    <recommendedName>
        <fullName evidence="1">Tryptophan synthase alpha chain</fullName>
        <ecNumber evidence="1">4.2.1.20</ecNumber>
    </recommendedName>
</protein>
<organism>
    <name type="scientific">Cereibacter sphaeroides (strain ATCC 17029 / ATH 2.4.9)</name>
    <name type="common">Rhodobacter sphaeroides</name>
    <dbReference type="NCBI Taxonomy" id="349101"/>
    <lineage>
        <taxon>Bacteria</taxon>
        <taxon>Pseudomonadati</taxon>
        <taxon>Pseudomonadota</taxon>
        <taxon>Alphaproteobacteria</taxon>
        <taxon>Rhodobacterales</taxon>
        <taxon>Paracoccaceae</taxon>
        <taxon>Cereibacter</taxon>
    </lineage>
</organism>